<proteinExistence type="inferred from homology"/>
<gene>
    <name evidence="1" type="primary">rpsQ</name>
    <name type="ordered locus">BCAH820_0131</name>
</gene>
<dbReference type="EMBL" id="CP001283">
    <property type="protein sequence ID" value="ACK89883.1"/>
    <property type="molecule type" value="Genomic_DNA"/>
</dbReference>
<dbReference type="RefSeq" id="WP_000004106.1">
    <property type="nucleotide sequence ID" value="NC_011773.1"/>
</dbReference>
<dbReference type="SMR" id="B7JKC8"/>
<dbReference type="GeneID" id="93010934"/>
<dbReference type="KEGG" id="bcu:BCAH820_0131"/>
<dbReference type="HOGENOM" id="CLU_073626_1_0_9"/>
<dbReference type="Proteomes" id="UP000001363">
    <property type="component" value="Chromosome"/>
</dbReference>
<dbReference type="GO" id="GO:0022627">
    <property type="term" value="C:cytosolic small ribosomal subunit"/>
    <property type="evidence" value="ECO:0007669"/>
    <property type="project" value="TreeGrafter"/>
</dbReference>
<dbReference type="GO" id="GO:0019843">
    <property type="term" value="F:rRNA binding"/>
    <property type="evidence" value="ECO:0007669"/>
    <property type="project" value="UniProtKB-UniRule"/>
</dbReference>
<dbReference type="GO" id="GO:0003735">
    <property type="term" value="F:structural constituent of ribosome"/>
    <property type="evidence" value="ECO:0007669"/>
    <property type="project" value="InterPro"/>
</dbReference>
<dbReference type="GO" id="GO:0006412">
    <property type="term" value="P:translation"/>
    <property type="evidence" value="ECO:0007669"/>
    <property type="project" value="UniProtKB-UniRule"/>
</dbReference>
<dbReference type="CDD" id="cd00364">
    <property type="entry name" value="Ribosomal_uS17"/>
    <property type="match status" value="1"/>
</dbReference>
<dbReference type="FunFam" id="2.40.50.140:FF:000026">
    <property type="entry name" value="30S ribosomal protein S17"/>
    <property type="match status" value="1"/>
</dbReference>
<dbReference type="Gene3D" id="2.40.50.140">
    <property type="entry name" value="Nucleic acid-binding proteins"/>
    <property type="match status" value="1"/>
</dbReference>
<dbReference type="HAMAP" id="MF_01345_B">
    <property type="entry name" value="Ribosomal_uS17_B"/>
    <property type="match status" value="1"/>
</dbReference>
<dbReference type="InterPro" id="IPR012340">
    <property type="entry name" value="NA-bd_OB-fold"/>
</dbReference>
<dbReference type="InterPro" id="IPR000266">
    <property type="entry name" value="Ribosomal_uS17"/>
</dbReference>
<dbReference type="InterPro" id="IPR019984">
    <property type="entry name" value="Ribosomal_uS17_bact/chlr"/>
</dbReference>
<dbReference type="InterPro" id="IPR019979">
    <property type="entry name" value="Ribosomal_uS17_CS"/>
</dbReference>
<dbReference type="NCBIfam" id="NF004123">
    <property type="entry name" value="PRK05610.1"/>
    <property type="match status" value="1"/>
</dbReference>
<dbReference type="NCBIfam" id="TIGR03635">
    <property type="entry name" value="uS17_bact"/>
    <property type="match status" value="1"/>
</dbReference>
<dbReference type="PANTHER" id="PTHR10744">
    <property type="entry name" value="40S RIBOSOMAL PROTEIN S11 FAMILY MEMBER"/>
    <property type="match status" value="1"/>
</dbReference>
<dbReference type="PANTHER" id="PTHR10744:SF1">
    <property type="entry name" value="SMALL RIBOSOMAL SUBUNIT PROTEIN US17M"/>
    <property type="match status" value="1"/>
</dbReference>
<dbReference type="Pfam" id="PF00366">
    <property type="entry name" value="Ribosomal_S17"/>
    <property type="match status" value="1"/>
</dbReference>
<dbReference type="PRINTS" id="PR00973">
    <property type="entry name" value="RIBOSOMALS17"/>
</dbReference>
<dbReference type="SUPFAM" id="SSF50249">
    <property type="entry name" value="Nucleic acid-binding proteins"/>
    <property type="match status" value="1"/>
</dbReference>
<dbReference type="PROSITE" id="PS00056">
    <property type="entry name" value="RIBOSOMAL_S17"/>
    <property type="match status" value="1"/>
</dbReference>
<keyword id="KW-0687">Ribonucleoprotein</keyword>
<keyword id="KW-0689">Ribosomal protein</keyword>
<keyword id="KW-0694">RNA-binding</keyword>
<keyword id="KW-0699">rRNA-binding</keyword>
<comment type="function">
    <text evidence="1">One of the primary rRNA binding proteins, it binds specifically to the 5'-end of 16S ribosomal RNA.</text>
</comment>
<comment type="subunit">
    <text evidence="1">Part of the 30S ribosomal subunit.</text>
</comment>
<comment type="similarity">
    <text evidence="1">Belongs to the universal ribosomal protein uS17 family.</text>
</comment>
<protein>
    <recommendedName>
        <fullName evidence="1">Small ribosomal subunit protein uS17</fullName>
    </recommendedName>
    <alternativeName>
        <fullName evidence="2">30S ribosomal protein S17</fullName>
    </alternativeName>
</protein>
<organism>
    <name type="scientific">Bacillus cereus (strain AH820)</name>
    <dbReference type="NCBI Taxonomy" id="405535"/>
    <lineage>
        <taxon>Bacteria</taxon>
        <taxon>Bacillati</taxon>
        <taxon>Bacillota</taxon>
        <taxon>Bacilli</taxon>
        <taxon>Bacillales</taxon>
        <taxon>Bacillaceae</taxon>
        <taxon>Bacillus</taxon>
        <taxon>Bacillus cereus group</taxon>
    </lineage>
</organism>
<feature type="chain" id="PRO_1000143217" description="Small ribosomal subunit protein uS17">
    <location>
        <begin position="1"/>
        <end position="87"/>
    </location>
</feature>
<accession>B7JKC8</accession>
<sequence length="87" mass="10189">MSERNQRKVYTGRVVSDKMDKTITVLVETYKTHSLYGKRVKYSKKYKAHDEQNQAKLGDIVKIMETRPLSATKRFRLVEIVEEAVII</sequence>
<reference key="1">
    <citation type="submission" date="2008-10" db="EMBL/GenBank/DDBJ databases">
        <title>Genome sequence of Bacillus cereus AH820.</title>
        <authorList>
            <person name="Dodson R.J."/>
            <person name="Durkin A.S."/>
            <person name="Rosovitz M.J."/>
            <person name="Rasko D.A."/>
            <person name="Hoffmaster A."/>
            <person name="Ravel J."/>
            <person name="Sutton G."/>
        </authorList>
    </citation>
    <scope>NUCLEOTIDE SEQUENCE [LARGE SCALE GENOMIC DNA]</scope>
    <source>
        <strain>AH820</strain>
    </source>
</reference>
<name>RS17_BACC0</name>
<evidence type="ECO:0000255" key="1">
    <source>
        <dbReference type="HAMAP-Rule" id="MF_01345"/>
    </source>
</evidence>
<evidence type="ECO:0000305" key="2"/>